<organism>
    <name type="scientific">Euglena longa</name>
    <name type="common">Euglenophycean alga</name>
    <name type="synonym">Astasia longa</name>
    <dbReference type="NCBI Taxonomy" id="3037"/>
    <lineage>
        <taxon>Eukaryota</taxon>
        <taxon>Discoba</taxon>
        <taxon>Euglenozoa</taxon>
        <taxon>Euglenida</taxon>
        <taxon>Spirocuta</taxon>
        <taxon>Euglenophyceae</taxon>
        <taxon>Euglenales</taxon>
        <taxon>Euglenaceae</taxon>
        <taxon>Euglena</taxon>
    </lineage>
</organism>
<reference key="1">
    <citation type="journal article" date="1990" name="Mol. Gen. Genet.">
        <title>Genes for the plastid elongation factor Tu and ribosomal protein S7 and six tRNA genes on the 73 kb DNA from Astasia longa that resembles the chloroplast DNA of Euglena.</title>
        <authorList>
            <person name="Siemeister G."/>
            <person name="Buchholz C."/>
            <person name="Hachtel W."/>
        </authorList>
    </citation>
    <scope>NUCLEOTIDE SEQUENCE [GENOMIC DNA]</scope>
    <source>
        <strain>CCAP 1204-17a</strain>
    </source>
</reference>
<reference key="2">
    <citation type="journal article" date="1994" name="Curr. Genet.">
        <title>Genes for components of the chloroplast translational apparatus are conserved in the reduced 73-kb plastid DNA of the nonphotosynthetic euglenoid flagellate Astasia longa.</title>
        <authorList>
            <person name="Gockel G."/>
            <person name="Hachtel W."/>
            <person name="Baier S."/>
            <person name="Fliss C."/>
            <person name="Henke M."/>
        </authorList>
    </citation>
    <scope>NUCLEOTIDE SEQUENCE [GENOMIC DNA]</scope>
    <source>
        <strain>CCAP 1204-17a</strain>
    </source>
</reference>
<reference key="3">
    <citation type="journal article" date="2000" name="Protist">
        <title>Complete gene map of the plastid genome of the nonphotosynthetic euglenoid flagellate Astasia longa.</title>
        <authorList>
            <person name="Gockel G."/>
            <person name="Hachtel W."/>
        </authorList>
    </citation>
    <scope>NUCLEOTIDE SEQUENCE [LARGE SCALE GENOMIC DNA]</scope>
    <source>
        <strain>CCAP 1204-17a</strain>
    </source>
</reference>
<proteinExistence type="inferred from homology"/>
<evidence type="ECO:0000250" key="1"/>
<evidence type="ECO:0000255" key="2">
    <source>
        <dbReference type="HAMAP-Rule" id="MF_00118"/>
    </source>
</evidence>
<evidence type="ECO:0000305" key="3"/>
<name>EFTU_EUGLO</name>
<feature type="chain" id="PRO_0000091445" description="Elongation factor Tu, plastid">
    <location>
        <begin position="1"/>
        <end position="409"/>
    </location>
</feature>
<feature type="domain" description="tr-type G">
    <location>
        <begin position="10"/>
        <end position="214"/>
    </location>
</feature>
<feature type="region of interest" description="G1" evidence="1">
    <location>
        <begin position="19"/>
        <end position="26"/>
    </location>
</feature>
<feature type="region of interest" description="G2" evidence="1">
    <location>
        <begin position="60"/>
        <end position="64"/>
    </location>
</feature>
<feature type="region of interest" description="G3" evidence="1">
    <location>
        <begin position="81"/>
        <end position="84"/>
    </location>
</feature>
<feature type="region of interest" description="G4" evidence="1">
    <location>
        <begin position="136"/>
        <end position="139"/>
    </location>
</feature>
<feature type="region of interest" description="G5" evidence="1">
    <location>
        <begin position="174"/>
        <end position="176"/>
    </location>
</feature>
<feature type="binding site" evidence="1">
    <location>
        <begin position="19"/>
        <end position="26"/>
    </location>
    <ligand>
        <name>GTP</name>
        <dbReference type="ChEBI" id="CHEBI:37565"/>
    </ligand>
</feature>
<feature type="binding site" evidence="2">
    <location>
        <position position="26"/>
    </location>
    <ligand>
        <name>Mg(2+)</name>
        <dbReference type="ChEBI" id="CHEBI:18420"/>
    </ligand>
</feature>
<feature type="binding site" evidence="1">
    <location>
        <begin position="81"/>
        <end position="85"/>
    </location>
    <ligand>
        <name>GTP</name>
        <dbReference type="ChEBI" id="CHEBI:37565"/>
    </ligand>
</feature>
<feature type="binding site" evidence="1">
    <location>
        <begin position="136"/>
        <end position="139"/>
    </location>
    <ligand>
        <name>GTP</name>
        <dbReference type="ChEBI" id="CHEBI:37565"/>
    </ligand>
</feature>
<gene>
    <name type="primary">tufA</name>
</gene>
<comment type="function">
    <text evidence="2">GTP hydrolase that promotes the GTP-dependent binding of aminoacyl-tRNA to the A-site of ribosomes during protein biosynthesis.</text>
</comment>
<comment type="catalytic activity">
    <reaction evidence="2">
        <text>GTP + H2O = GDP + phosphate + H(+)</text>
        <dbReference type="Rhea" id="RHEA:19669"/>
        <dbReference type="ChEBI" id="CHEBI:15377"/>
        <dbReference type="ChEBI" id="CHEBI:15378"/>
        <dbReference type="ChEBI" id="CHEBI:37565"/>
        <dbReference type="ChEBI" id="CHEBI:43474"/>
        <dbReference type="ChEBI" id="CHEBI:58189"/>
        <dbReference type="EC" id="3.6.5.3"/>
    </reaction>
    <physiologicalReaction direction="left-to-right" evidence="2">
        <dbReference type="Rhea" id="RHEA:19670"/>
    </physiologicalReaction>
</comment>
<comment type="subcellular location">
    <subcellularLocation>
        <location>Plastid</location>
    </subcellularLocation>
</comment>
<comment type="similarity">
    <text evidence="3">Belongs to the TRAFAC class translation factor GTPase superfamily. Classic translation factor GTPase family. EF-Tu/EF-1A subfamily.</text>
</comment>
<geneLocation type="non-photosynthetic plastid"/>
<protein>
    <recommendedName>
        <fullName>Elongation factor Tu, plastid</fullName>
        <shortName>EF-Tu</shortName>
        <ecNumber evidence="2">3.6.5.3</ecNumber>
    </recommendedName>
</protein>
<accession>P14634</accession>
<dbReference type="EC" id="3.6.5.3" evidence="2"/>
<dbReference type="EMBL" id="AJ294725">
    <property type="protein sequence ID" value="CAC24610.1"/>
    <property type="molecule type" value="Genomic_DNA"/>
</dbReference>
<dbReference type="PIR" id="S14923">
    <property type="entry name" value="EFITT"/>
</dbReference>
<dbReference type="RefSeq" id="NP_074999.1">
    <property type="nucleotide sequence ID" value="NC_002652.1"/>
</dbReference>
<dbReference type="SMR" id="P14634"/>
<dbReference type="GeneID" id="802512"/>
<dbReference type="GO" id="GO:0005739">
    <property type="term" value="C:mitochondrion"/>
    <property type="evidence" value="ECO:0007669"/>
    <property type="project" value="TreeGrafter"/>
</dbReference>
<dbReference type="GO" id="GO:0009536">
    <property type="term" value="C:plastid"/>
    <property type="evidence" value="ECO:0007669"/>
    <property type="project" value="UniProtKB-SubCell"/>
</dbReference>
<dbReference type="GO" id="GO:0005525">
    <property type="term" value="F:GTP binding"/>
    <property type="evidence" value="ECO:0007669"/>
    <property type="project" value="UniProtKB-KW"/>
</dbReference>
<dbReference type="GO" id="GO:0003924">
    <property type="term" value="F:GTPase activity"/>
    <property type="evidence" value="ECO:0007669"/>
    <property type="project" value="InterPro"/>
</dbReference>
<dbReference type="GO" id="GO:0003746">
    <property type="term" value="F:translation elongation factor activity"/>
    <property type="evidence" value="ECO:0007669"/>
    <property type="project" value="UniProtKB-KW"/>
</dbReference>
<dbReference type="GO" id="GO:0070125">
    <property type="term" value="P:mitochondrial translational elongation"/>
    <property type="evidence" value="ECO:0007669"/>
    <property type="project" value="TreeGrafter"/>
</dbReference>
<dbReference type="CDD" id="cd01884">
    <property type="entry name" value="EF_Tu"/>
    <property type="match status" value="1"/>
</dbReference>
<dbReference type="CDD" id="cd03697">
    <property type="entry name" value="EFTU_II"/>
    <property type="match status" value="1"/>
</dbReference>
<dbReference type="CDD" id="cd03707">
    <property type="entry name" value="EFTU_III"/>
    <property type="match status" value="1"/>
</dbReference>
<dbReference type="FunFam" id="2.40.30.10:FF:000001">
    <property type="entry name" value="Elongation factor Tu"/>
    <property type="match status" value="1"/>
</dbReference>
<dbReference type="FunFam" id="2.40.30.10:FF:000046">
    <property type="entry name" value="Elongation factor Tu"/>
    <property type="match status" value="1"/>
</dbReference>
<dbReference type="FunFam" id="3.40.50.300:FF:000003">
    <property type="entry name" value="Elongation factor Tu"/>
    <property type="match status" value="1"/>
</dbReference>
<dbReference type="Gene3D" id="3.40.50.300">
    <property type="entry name" value="P-loop containing nucleotide triphosphate hydrolases"/>
    <property type="match status" value="1"/>
</dbReference>
<dbReference type="Gene3D" id="2.40.30.10">
    <property type="entry name" value="Translation factors"/>
    <property type="match status" value="2"/>
</dbReference>
<dbReference type="HAMAP" id="MF_00118_B">
    <property type="entry name" value="EF_Tu_B"/>
    <property type="match status" value="1"/>
</dbReference>
<dbReference type="InterPro" id="IPR041709">
    <property type="entry name" value="EF-Tu_GTP-bd"/>
</dbReference>
<dbReference type="InterPro" id="IPR050055">
    <property type="entry name" value="EF-Tu_GTPase"/>
</dbReference>
<dbReference type="InterPro" id="IPR004161">
    <property type="entry name" value="EFTu-like_2"/>
</dbReference>
<dbReference type="InterPro" id="IPR033720">
    <property type="entry name" value="EFTU_2"/>
</dbReference>
<dbReference type="InterPro" id="IPR031157">
    <property type="entry name" value="G_TR_CS"/>
</dbReference>
<dbReference type="InterPro" id="IPR027417">
    <property type="entry name" value="P-loop_NTPase"/>
</dbReference>
<dbReference type="InterPro" id="IPR005225">
    <property type="entry name" value="Small_GTP-bd"/>
</dbReference>
<dbReference type="InterPro" id="IPR000795">
    <property type="entry name" value="T_Tr_GTP-bd_dom"/>
</dbReference>
<dbReference type="InterPro" id="IPR009000">
    <property type="entry name" value="Transl_B-barrel_sf"/>
</dbReference>
<dbReference type="InterPro" id="IPR009001">
    <property type="entry name" value="Transl_elong_EF1A/Init_IF2_C"/>
</dbReference>
<dbReference type="InterPro" id="IPR004541">
    <property type="entry name" value="Transl_elong_EFTu/EF1A_bac/org"/>
</dbReference>
<dbReference type="InterPro" id="IPR004160">
    <property type="entry name" value="Transl_elong_EFTu/EF1A_C"/>
</dbReference>
<dbReference type="NCBIfam" id="TIGR00485">
    <property type="entry name" value="EF-Tu"/>
    <property type="match status" value="1"/>
</dbReference>
<dbReference type="NCBIfam" id="NF000766">
    <property type="entry name" value="PRK00049.1"/>
    <property type="match status" value="1"/>
</dbReference>
<dbReference type="NCBIfam" id="NF009372">
    <property type="entry name" value="PRK12735.1"/>
    <property type="match status" value="1"/>
</dbReference>
<dbReference type="NCBIfam" id="NF009373">
    <property type="entry name" value="PRK12736.1"/>
    <property type="match status" value="1"/>
</dbReference>
<dbReference type="NCBIfam" id="TIGR00231">
    <property type="entry name" value="small_GTP"/>
    <property type="match status" value="1"/>
</dbReference>
<dbReference type="PANTHER" id="PTHR43721:SF5">
    <property type="entry name" value="ELONGATION FACTOR TU, CHLOROPLASTIC"/>
    <property type="match status" value="1"/>
</dbReference>
<dbReference type="PANTHER" id="PTHR43721">
    <property type="entry name" value="ELONGATION FACTOR TU-RELATED"/>
    <property type="match status" value="1"/>
</dbReference>
<dbReference type="Pfam" id="PF00009">
    <property type="entry name" value="GTP_EFTU"/>
    <property type="match status" value="1"/>
</dbReference>
<dbReference type="Pfam" id="PF03144">
    <property type="entry name" value="GTP_EFTU_D2"/>
    <property type="match status" value="1"/>
</dbReference>
<dbReference type="Pfam" id="PF03143">
    <property type="entry name" value="GTP_EFTU_D3"/>
    <property type="match status" value="1"/>
</dbReference>
<dbReference type="PRINTS" id="PR00315">
    <property type="entry name" value="ELONGATNFCT"/>
</dbReference>
<dbReference type="SUPFAM" id="SSF50465">
    <property type="entry name" value="EF-Tu/eEF-1alpha/eIF2-gamma C-terminal domain"/>
    <property type="match status" value="1"/>
</dbReference>
<dbReference type="SUPFAM" id="SSF52540">
    <property type="entry name" value="P-loop containing nucleoside triphosphate hydrolases"/>
    <property type="match status" value="1"/>
</dbReference>
<dbReference type="SUPFAM" id="SSF50447">
    <property type="entry name" value="Translation proteins"/>
    <property type="match status" value="1"/>
</dbReference>
<dbReference type="PROSITE" id="PS00301">
    <property type="entry name" value="G_TR_1"/>
    <property type="match status" value="1"/>
</dbReference>
<dbReference type="PROSITE" id="PS51722">
    <property type="entry name" value="G_TR_2"/>
    <property type="match status" value="1"/>
</dbReference>
<keyword id="KW-0251">Elongation factor</keyword>
<keyword id="KW-0342">GTP-binding</keyword>
<keyword id="KW-0378">Hydrolase</keyword>
<keyword id="KW-0460">Magnesium</keyword>
<keyword id="KW-0479">Metal-binding</keyword>
<keyword id="KW-0547">Nucleotide-binding</keyword>
<keyword id="KW-0934">Plastid</keyword>
<keyword id="KW-0648">Protein biosynthesis</keyword>
<sequence length="409" mass="45184">MSRQKFERIKPHINIGTIGHVDHGKTTLTAAITMALSVTGNTKSKKYEEIDSSPEEKARGITINTAHVEYETKNRHYAHVDCPGHADYIKNMITGAAQMDGAILVISATDGPMPQTKEHILLAKQVGVPNLVVFLNKEDQIDDNELLELIELEIRETLNNYEFPGDEIPIITGSALLAIEALNKNPKIIKGENKWVDKILDLMDKIDSYIPTPIRDTDKDFLLAIEDVLSITGRGTVATGRIERGKIKVGETVELIGLKNIKSTTITGLEMFQKSLDEAIAGDNVGVLLRGIQKNEVERGMVIAKPGTIQPHIKFNSQVYILTKEEGGRHTPFFEGYKPQFYVRTTDVTGKIESFKSDDGTTVQMVMPGDKIKMIVELVQPIAIEKGMRFAIREGGKTVGAGVIINIID</sequence>